<proteinExistence type="evidence at transcript level"/>
<comment type="function">
    <text evidence="4">Catalyzes the reduction of aromatic alpha-keto acids in the presence of NADH. Plays essential roles in the malate-aspartate shuttle and the tricarboxylic acid cycle, important in mitochondrial NADH supply for oxidative phosphorylation. Catalyzes the reduction of 2-oxoglutarate to 2-hydroxyglutarate, leading to elevated reactive oxygen species (ROS).</text>
</comment>
<comment type="catalytic activity">
    <reaction evidence="4">
        <text>(S)-malate + NAD(+) = oxaloacetate + NADH + H(+)</text>
        <dbReference type="Rhea" id="RHEA:21432"/>
        <dbReference type="ChEBI" id="CHEBI:15378"/>
        <dbReference type="ChEBI" id="CHEBI:15589"/>
        <dbReference type="ChEBI" id="CHEBI:16452"/>
        <dbReference type="ChEBI" id="CHEBI:57540"/>
        <dbReference type="ChEBI" id="CHEBI:57945"/>
        <dbReference type="EC" id="1.1.1.37"/>
    </reaction>
    <physiologicalReaction direction="left-to-right" evidence="4">
        <dbReference type="Rhea" id="RHEA:21433"/>
    </physiologicalReaction>
    <physiologicalReaction direction="right-to-left" evidence="4">
        <dbReference type="Rhea" id="RHEA:21434"/>
    </physiologicalReaction>
</comment>
<comment type="catalytic activity">
    <reaction evidence="4">
        <text>(2R)-2-hydroxy-3-(4-hydroxyphenyl)propanoate + NAD(+) = 3-(4-hydroxyphenyl)pyruvate + NADH + H(+)</text>
        <dbReference type="Rhea" id="RHEA:10780"/>
        <dbReference type="ChEBI" id="CHEBI:10980"/>
        <dbReference type="ChEBI" id="CHEBI:15378"/>
        <dbReference type="ChEBI" id="CHEBI:36242"/>
        <dbReference type="ChEBI" id="CHEBI:57540"/>
        <dbReference type="ChEBI" id="CHEBI:57945"/>
        <dbReference type="EC" id="1.1.1.96"/>
    </reaction>
    <physiologicalReaction direction="right-to-left" evidence="4">
        <dbReference type="Rhea" id="RHEA:10782"/>
    </physiologicalReaction>
</comment>
<comment type="catalytic activity">
    <reaction evidence="4">
        <text>(S)-2-hydroxyglutarate + NAD(+) = 2-oxoglutarate + NADH + H(+)</text>
        <dbReference type="Rhea" id="RHEA:57172"/>
        <dbReference type="ChEBI" id="CHEBI:15378"/>
        <dbReference type="ChEBI" id="CHEBI:16782"/>
        <dbReference type="ChEBI" id="CHEBI:16810"/>
        <dbReference type="ChEBI" id="CHEBI:57540"/>
        <dbReference type="ChEBI" id="CHEBI:57945"/>
    </reaction>
    <physiologicalReaction direction="right-to-left" evidence="4">
        <dbReference type="Rhea" id="RHEA:57174"/>
    </physiologicalReaction>
</comment>
<comment type="subunit">
    <text evidence="2">Homodimer.</text>
</comment>
<comment type="subcellular location">
    <subcellularLocation>
        <location evidence="4">Cytoplasm</location>
        <location evidence="4">Cytosol</location>
    </subcellularLocation>
</comment>
<comment type="PTM">
    <text evidence="4">ISGylated.</text>
</comment>
<comment type="PTM">
    <text evidence="4">Acetylation at Lys-118 dramatically enhances enzymatic activity and promotes adipogenic differentiation.</text>
</comment>
<comment type="similarity">
    <text evidence="5">Belongs to the LDH/MDH superfamily. MDH type 2 family.</text>
</comment>
<accession>Q7YRU4</accession>
<sequence length="334" mass="36423">MSEPIRVLVTGAAGQIAYSLLYSIGNGSVFGKDQPIILVLLDITPMMGVLDGVLMELQDCALPLLKDVIATDKEDVAFKDLDVAILVGSMPRRDGMERKDLLKANVKIFKCQGAALEKYAKKSVKVIVVGNPANTNCLTACKSAPSIPKENFSCLTRLDHNRAKAQIALKLGVTSDDVKNVIIWGNHSSTQYPDVSHAKVKLHGKEVGVYDALKDDSWLKGEFITTVQQRGAAVIKARKLSSAMSAAKAICDHVRDIWFGTPEGEFVSMGIISDGNPYGVPDDLLYSFPVTIKNKTWKVVEGLTINDFSREKMDLTAKELAEEKETAFEFLSSA</sequence>
<protein>
    <recommendedName>
        <fullName>Malate dehydrogenase, cytoplasmic</fullName>
        <ecNumber>1.1.1.37</ecNumber>
    </recommendedName>
    <alternativeName>
        <fullName evidence="5">Aromatic alpha-keto acid reductase</fullName>
        <shortName evidence="5">KAR</shortName>
        <ecNumber evidence="4">1.1.1.96</ecNumber>
    </alternativeName>
    <alternativeName>
        <fullName>Cytosolic malate dehydrogenase</fullName>
    </alternativeName>
</protein>
<keyword id="KW-0007">Acetylation</keyword>
<keyword id="KW-0963">Cytoplasm</keyword>
<keyword id="KW-0488">Methylation</keyword>
<keyword id="KW-0520">NAD</keyword>
<keyword id="KW-0560">Oxidoreductase</keyword>
<keyword id="KW-0597">Phosphoprotein</keyword>
<keyword id="KW-1185">Reference proteome</keyword>
<keyword id="KW-0816">Tricarboxylic acid cycle</keyword>
<keyword id="KW-0832">Ubl conjugation</keyword>
<evidence type="ECO:0000250" key="1">
    <source>
        <dbReference type="UniProtKB" id="O88989"/>
    </source>
</evidence>
<evidence type="ECO:0000250" key="2">
    <source>
        <dbReference type="UniProtKB" id="P11708"/>
    </source>
</evidence>
<evidence type="ECO:0000250" key="3">
    <source>
        <dbReference type="UniProtKB" id="P14152"/>
    </source>
</evidence>
<evidence type="ECO:0000250" key="4">
    <source>
        <dbReference type="UniProtKB" id="P40925"/>
    </source>
</evidence>
<evidence type="ECO:0000305" key="5"/>
<name>MDHC_FELCA</name>
<dbReference type="EC" id="1.1.1.37"/>
<dbReference type="EC" id="1.1.1.96" evidence="4"/>
<dbReference type="EMBL" id="AB113364">
    <property type="protein sequence ID" value="BAC78621.1"/>
    <property type="molecule type" value="mRNA"/>
</dbReference>
<dbReference type="RefSeq" id="NP_001009329.1">
    <property type="nucleotide sequence ID" value="NM_001009329.1"/>
</dbReference>
<dbReference type="SMR" id="Q7YRU4"/>
<dbReference type="STRING" id="9685.ENSFCAP00000029433"/>
<dbReference type="PaxDb" id="9685-ENSFCAP00000017047"/>
<dbReference type="Ensembl" id="ENSFCAT00000034057.3">
    <property type="protein sequence ID" value="ENSFCAP00000029433.1"/>
    <property type="gene ID" value="ENSFCAG00000024183.4"/>
</dbReference>
<dbReference type="GeneID" id="493924"/>
<dbReference type="KEGG" id="fca:493924"/>
<dbReference type="CTD" id="4190"/>
<dbReference type="VGNC" id="VGNC:68220">
    <property type="gene designation" value="MDH1"/>
</dbReference>
<dbReference type="eggNOG" id="KOG1496">
    <property type="taxonomic scope" value="Eukaryota"/>
</dbReference>
<dbReference type="GeneTree" id="ENSGT00530000063410"/>
<dbReference type="HOGENOM" id="CLU_040727_2_0_1"/>
<dbReference type="InParanoid" id="Q7YRU4"/>
<dbReference type="OMA" id="HTWVNGT"/>
<dbReference type="OrthoDB" id="4069699at2759"/>
<dbReference type="Proteomes" id="UP000011712">
    <property type="component" value="Chromosome A3"/>
</dbReference>
<dbReference type="Bgee" id="ENSFCAG00000024183">
    <property type="expression patterns" value="Expressed in brain and 10 other cell types or tissues"/>
</dbReference>
<dbReference type="GO" id="GO:0005813">
    <property type="term" value="C:centrosome"/>
    <property type="evidence" value="ECO:0007669"/>
    <property type="project" value="Ensembl"/>
</dbReference>
<dbReference type="GO" id="GO:0005829">
    <property type="term" value="C:cytosol"/>
    <property type="evidence" value="ECO:0000318"/>
    <property type="project" value="GO_Central"/>
</dbReference>
<dbReference type="GO" id="GO:0047995">
    <property type="term" value="F:hydroxyphenylpyruvate reductase activity"/>
    <property type="evidence" value="ECO:0007669"/>
    <property type="project" value="RHEA"/>
</dbReference>
<dbReference type="GO" id="GO:0030060">
    <property type="term" value="F:L-malate dehydrogenase (NAD+) activity"/>
    <property type="evidence" value="ECO:0000318"/>
    <property type="project" value="GO_Central"/>
</dbReference>
<dbReference type="GO" id="GO:0006108">
    <property type="term" value="P:malate metabolic process"/>
    <property type="evidence" value="ECO:0000318"/>
    <property type="project" value="GO_Central"/>
</dbReference>
<dbReference type="GO" id="GO:0043490">
    <property type="term" value="P:malate-aspartate shuttle"/>
    <property type="evidence" value="ECO:0007669"/>
    <property type="project" value="Ensembl"/>
</dbReference>
<dbReference type="GO" id="GO:0006734">
    <property type="term" value="P:NADH metabolic process"/>
    <property type="evidence" value="ECO:0000318"/>
    <property type="project" value="GO_Central"/>
</dbReference>
<dbReference type="GO" id="GO:0006739">
    <property type="term" value="P:NADP metabolic process"/>
    <property type="evidence" value="ECO:0007669"/>
    <property type="project" value="Ensembl"/>
</dbReference>
<dbReference type="GO" id="GO:0006107">
    <property type="term" value="P:oxaloacetate metabolic process"/>
    <property type="evidence" value="ECO:0000318"/>
    <property type="project" value="GO_Central"/>
</dbReference>
<dbReference type="GO" id="GO:0006099">
    <property type="term" value="P:tricarboxylic acid cycle"/>
    <property type="evidence" value="ECO:0000318"/>
    <property type="project" value="GO_Central"/>
</dbReference>
<dbReference type="CDD" id="cd01336">
    <property type="entry name" value="MDH_cytoplasmic_cytosolic"/>
    <property type="match status" value="1"/>
</dbReference>
<dbReference type="FunFam" id="3.40.50.720:FF:000010">
    <property type="entry name" value="Malate dehydrogenase"/>
    <property type="match status" value="1"/>
</dbReference>
<dbReference type="FunFam" id="3.90.110.10:FF:000002">
    <property type="entry name" value="Malate dehydrogenase"/>
    <property type="match status" value="1"/>
</dbReference>
<dbReference type="Gene3D" id="3.90.110.10">
    <property type="entry name" value="Lactate dehydrogenase/glycoside hydrolase, family 4, C-terminal"/>
    <property type="match status" value="1"/>
</dbReference>
<dbReference type="Gene3D" id="3.40.50.720">
    <property type="entry name" value="NAD(P)-binding Rossmann-like Domain"/>
    <property type="match status" value="1"/>
</dbReference>
<dbReference type="HAMAP" id="MF_01517">
    <property type="entry name" value="Malate_dehydrog_2"/>
    <property type="match status" value="1"/>
</dbReference>
<dbReference type="InterPro" id="IPR001557">
    <property type="entry name" value="L-lactate/malate_DH"/>
</dbReference>
<dbReference type="InterPro" id="IPR022383">
    <property type="entry name" value="Lactate/malate_DH_C"/>
</dbReference>
<dbReference type="InterPro" id="IPR001236">
    <property type="entry name" value="Lactate/malate_DH_N"/>
</dbReference>
<dbReference type="InterPro" id="IPR015955">
    <property type="entry name" value="Lactate_DH/Glyco_Ohase_4_C"/>
</dbReference>
<dbReference type="InterPro" id="IPR001252">
    <property type="entry name" value="Malate_DH_AS"/>
</dbReference>
<dbReference type="InterPro" id="IPR011274">
    <property type="entry name" value="Malate_DH_NAD-dep_euk"/>
</dbReference>
<dbReference type="InterPro" id="IPR010945">
    <property type="entry name" value="Malate_DH_type2"/>
</dbReference>
<dbReference type="InterPro" id="IPR036291">
    <property type="entry name" value="NAD(P)-bd_dom_sf"/>
</dbReference>
<dbReference type="NCBIfam" id="TIGR01759">
    <property type="entry name" value="MalateDH-SF1"/>
    <property type="match status" value="1"/>
</dbReference>
<dbReference type="NCBIfam" id="TIGR01758">
    <property type="entry name" value="MDH_euk_cyt"/>
    <property type="match status" value="1"/>
</dbReference>
<dbReference type="NCBIfam" id="NF003916">
    <property type="entry name" value="PRK05442.1"/>
    <property type="match status" value="1"/>
</dbReference>
<dbReference type="PANTHER" id="PTHR23382">
    <property type="entry name" value="MALATE DEHYDROGENASE"/>
    <property type="match status" value="1"/>
</dbReference>
<dbReference type="Pfam" id="PF02866">
    <property type="entry name" value="Ldh_1_C"/>
    <property type="match status" value="1"/>
</dbReference>
<dbReference type="Pfam" id="PF00056">
    <property type="entry name" value="Ldh_1_N"/>
    <property type="match status" value="1"/>
</dbReference>
<dbReference type="PIRSF" id="PIRSF000102">
    <property type="entry name" value="Lac_mal_DH"/>
    <property type="match status" value="1"/>
</dbReference>
<dbReference type="SUPFAM" id="SSF56327">
    <property type="entry name" value="LDH C-terminal domain-like"/>
    <property type="match status" value="1"/>
</dbReference>
<dbReference type="SUPFAM" id="SSF51735">
    <property type="entry name" value="NAD(P)-binding Rossmann-fold domains"/>
    <property type="match status" value="1"/>
</dbReference>
<dbReference type="PROSITE" id="PS00068">
    <property type="entry name" value="MDH"/>
    <property type="match status" value="1"/>
</dbReference>
<feature type="initiator methionine" description="Removed" evidence="4">
    <location>
        <position position="1"/>
    </location>
</feature>
<feature type="chain" id="PRO_0000226736" description="Malate dehydrogenase, cytoplasmic">
    <location>
        <begin position="2"/>
        <end position="334"/>
    </location>
</feature>
<feature type="active site" description="Proton acceptor" evidence="2">
    <location>
        <position position="187"/>
    </location>
</feature>
<feature type="binding site" evidence="2">
    <location>
        <begin position="11"/>
        <end position="17"/>
    </location>
    <ligand>
        <name>NAD(+)</name>
        <dbReference type="ChEBI" id="CHEBI:57540"/>
    </ligand>
</feature>
<feature type="binding site" evidence="2">
    <location>
        <position position="42"/>
    </location>
    <ligand>
        <name>NAD(+)</name>
        <dbReference type="ChEBI" id="CHEBI:57540"/>
    </ligand>
</feature>
<feature type="binding site" evidence="2">
    <location>
        <position position="92"/>
    </location>
    <ligand>
        <name>substrate</name>
    </ligand>
</feature>
<feature type="binding site" evidence="2">
    <location>
        <position position="98"/>
    </location>
    <ligand>
        <name>substrate</name>
    </ligand>
</feature>
<feature type="binding site" evidence="2">
    <location>
        <position position="105"/>
    </location>
    <ligand>
        <name>NAD(+)</name>
        <dbReference type="ChEBI" id="CHEBI:57540"/>
    </ligand>
</feature>
<feature type="binding site" evidence="2">
    <location>
        <position position="112"/>
    </location>
    <ligand>
        <name>NAD(+)</name>
        <dbReference type="ChEBI" id="CHEBI:57540"/>
    </ligand>
</feature>
<feature type="binding site" evidence="2">
    <location>
        <begin position="129"/>
        <end position="131"/>
    </location>
    <ligand>
        <name>NAD(+)</name>
        <dbReference type="ChEBI" id="CHEBI:57540"/>
    </ligand>
</feature>
<feature type="binding site" evidence="2">
    <location>
        <position position="131"/>
    </location>
    <ligand>
        <name>substrate</name>
    </ligand>
</feature>
<feature type="binding site" evidence="2">
    <location>
        <position position="162"/>
    </location>
    <ligand>
        <name>substrate</name>
    </ligand>
</feature>
<feature type="modified residue" description="N-acetylserine" evidence="4">
    <location>
        <position position="2"/>
    </location>
</feature>
<feature type="modified residue" description="N6-succinyllysine" evidence="3">
    <location>
        <position position="110"/>
    </location>
</feature>
<feature type="modified residue" description="N6-acetyllysine" evidence="4">
    <location>
        <position position="118"/>
    </location>
</feature>
<feature type="modified residue" description="N6-acetyllysine" evidence="4">
    <location>
        <position position="121"/>
    </location>
</feature>
<feature type="modified residue" description="N6-succinyllysine" evidence="3">
    <location>
        <position position="214"/>
    </location>
</feature>
<feature type="modified residue" description="Phosphoserine" evidence="3">
    <location>
        <position position="217"/>
    </location>
</feature>
<feature type="modified residue" description="Omega-N-methylarginine" evidence="3">
    <location>
        <position position="230"/>
    </location>
</feature>
<feature type="modified residue" description="Phosphoserine" evidence="4">
    <location>
        <position position="241"/>
    </location>
</feature>
<feature type="modified residue" description="N6-acetyllysine; alternate" evidence="4">
    <location>
        <position position="298"/>
    </location>
</feature>
<feature type="modified residue" description="N6-succinyllysine; alternate" evidence="3">
    <location>
        <position position="298"/>
    </location>
</feature>
<feature type="modified residue" description="Phosphoserine" evidence="3">
    <location>
        <position position="309"/>
    </location>
</feature>
<feature type="modified residue" description="N6-succinyllysine" evidence="3">
    <location>
        <position position="318"/>
    </location>
</feature>
<feature type="modified residue" description="Phosphoserine" evidence="1">
    <location>
        <position position="332"/>
    </location>
</feature>
<feature type="modified residue" description="Phosphoserine" evidence="4">
    <location>
        <position position="333"/>
    </location>
</feature>
<reference key="1">
    <citation type="submission" date="2003-06" db="EMBL/GenBank/DDBJ databases">
        <title>Cloning and characterization of feline cytosolic malate dehydrogenase.</title>
        <authorList>
            <person name="Nakamura M."/>
            <person name="Sasaki N."/>
            <person name="Arai T."/>
        </authorList>
    </citation>
    <scope>NUCLEOTIDE SEQUENCE [MRNA]</scope>
    <source>
        <tissue>Liver</tissue>
    </source>
</reference>
<gene>
    <name type="primary">MDH1</name>
</gene>
<organism>
    <name type="scientific">Felis catus</name>
    <name type="common">Cat</name>
    <name type="synonym">Felis silvestris catus</name>
    <dbReference type="NCBI Taxonomy" id="9685"/>
    <lineage>
        <taxon>Eukaryota</taxon>
        <taxon>Metazoa</taxon>
        <taxon>Chordata</taxon>
        <taxon>Craniata</taxon>
        <taxon>Vertebrata</taxon>
        <taxon>Euteleostomi</taxon>
        <taxon>Mammalia</taxon>
        <taxon>Eutheria</taxon>
        <taxon>Laurasiatheria</taxon>
        <taxon>Carnivora</taxon>
        <taxon>Feliformia</taxon>
        <taxon>Felidae</taxon>
        <taxon>Felinae</taxon>
        <taxon>Felis</taxon>
    </lineage>
</organism>